<keyword id="KW-0535">Nitrogen fixation</keyword>
<keyword id="KW-1185">Reference proteome</keyword>
<accession>A8HV62</accession>
<name>COWN_AZOC5</name>
<evidence type="ECO:0000255" key="1">
    <source>
        <dbReference type="HAMAP-Rule" id="MF_02117"/>
    </source>
</evidence>
<protein>
    <recommendedName>
        <fullName evidence="1">N(2)-fixation sustaining protein CowN</fullName>
    </recommendedName>
    <alternativeName>
        <fullName evidence="1">CO weal-nitrogenase</fullName>
    </alternativeName>
</protein>
<sequence length="122" mass="14006">MRASPTPWLSRAEPYCQRESPMNLLTTTPAGDRYVTFNGIDFEGNMARVLAHLRRYIDDPRTGNAFWDRFKARLAAAESGGNAFQDKLLLLHSHVYYMGDLFEDQEDEAALADLRKLEEECF</sequence>
<dbReference type="EMBL" id="AP009384">
    <property type="protein sequence ID" value="BAF90274.1"/>
    <property type="molecule type" value="Genomic_DNA"/>
</dbReference>
<dbReference type="STRING" id="438753.AZC_4276"/>
<dbReference type="KEGG" id="azc:AZC_4276"/>
<dbReference type="eggNOG" id="ENOG5032SZ8">
    <property type="taxonomic scope" value="Bacteria"/>
</dbReference>
<dbReference type="HOGENOM" id="CLU_149349_0_0_5"/>
<dbReference type="Proteomes" id="UP000000270">
    <property type="component" value="Chromosome"/>
</dbReference>
<dbReference type="GO" id="GO:0009399">
    <property type="term" value="P:nitrogen fixation"/>
    <property type="evidence" value="ECO:0007669"/>
    <property type="project" value="UniProtKB-UniRule"/>
</dbReference>
<dbReference type="HAMAP" id="MF_02117">
    <property type="entry name" value="CowN"/>
    <property type="match status" value="1"/>
</dbReference>
<dbReference type="InterPro" id="IPR024899">
    <property type="entry name" value="CowN"/>
</dbReference>
<dbReference type="NCBIfam" id="NF033689">
    <property type="entry name" value="N2Fix_CO_CowN"/>
    <property type="match status" value="1"/>
</dbReference>
<dbReference type="Pfam" id="PF20543">
    <property type="entry name" value="CowN"/>
    <property type="match status" value="1"/>
</dbReference>
<reference key="1">
    <citation type="submission" date="2007-04" db="EMBL/GenBank/DDBJ databases">
        <title>Complete genome sequence of the nitrogen-fixing bacterium Azorhizobium caulinodans ORS571.</title>
        <authorList>
            <person name="Lee K.B."/>
            <person name="Backer P.D."/>
            <person name="Aono T."/>
            <person name="Liu C.T."/>
            <person name="Suzuki S."/>
            <person name="Suzuki T."/>
            <person name="Kaneko T."/>
            <person name="Yamada M."/>
            <person name="Tabata S."/>
            <person name="Kupfer D.M."/>
            <person name="Najar F.Z."/>
            <person name="Wiley G.B."/>
            <person name="Roe B."/>
            <person name="Binnewies T."/>
            <person name="Ussery D."/>
            <person name="Vereecke D."/>
            <person name="Gevers D."/>
            <person name="Holsters M."/>
            <person name="Oyaizu H."/>
        </authorList>
    </citation>
    <scope>NUCLEOTIDE SEQUENCE [LARGE SCALE GENOMIC DNA]</scope>
    <source>
        <strain>ATCC 43989 / DSM 5975 / JCM 20966 / LMG 6465 / NBRC 14845 / NCIMB 13405 / ORS 571</strain>
    </source>
</reference>
<comment type="function">
    <text evidence="1">Is required to sustain N(2)-dependent growth in the presence of low levels of carbon monoxide (CO). Probably acts by protecting the N(2) fixation ability of the nitrogenase complex, which is inactivated in the presence of CO.</text>
</comment>
<comment type="similarity">
    <text evidence="1">Belongs to the CowN family.</text>
</comment>
<gene>
    <name evidence="1" type="primary">cowN</name>
    <name type="ordered locus">AZC_4276</name>
</gene>
<organism>
    <name type="scientific">Azorhizobium caulinodans (strain ATCC 43989 / DSM 5975 / JCM 20966 / LMG 6465 / NBRC 14845 / NCIMB 13405 / ORS 571)</name>
    <dbReference type="NCBI Taxonomy" id="438753"/>
    <lineage>
        <taxon>Bacteria</taxon>
        <taxon>Pseudomonadati</taxon>
        <taxon>Pseudomonadota</taxon>
        <taxon>Alphaproteobacteria</taxon>
        <taxon>Hyphomicrobiales</taxon>
        <taxon>Xanthobacteraceae</taxon>
        <taxon>Azorhizobium</taxon>
    </lineage>
</organism>
<proteinExistence type="inferred from homology"/>
<feature type="chain" id="PRO_0000407250" description="N(2)-fixation sustaining protein CowN">
    <location>
        <begin position="1"/>
        <end position="122"/>
    </location>
</feature>